<organism>
    <name type="scientific">Burkholderia vietnamiensis (strain G4 / LMG 22486)</name>
    <name type="common">Burkholderia cepacia (strain R1808)</name>
    <dbReference type="NCBI Taxonomy" id="269482"/>
    <lineage>
        <taxon>Bacteria</taxon>
        <taxon>Pseudomonadati</taxon>
        <taxon>Pseudomonadota</taxon>
        <taxon>Betaproteobacteria</taxon>
        <taxon>Burkholderiales</taxon>
        <taxon>Burkholderiaceae</taxon>
        <taxon>Burkholderia</taxon>
        <taxon>Burkholderia cepacia complex</taxon>
    </lineage>
</organism>
<proteinExistence type="inferred from homology"/>
<keyword id="KW-0687">Ribonucleoprotein</keyword>
<keyword id="KW-0689">Ribosomal protein</keyword>
<keyword id="KW-0694">RNA-binding</keyword>
<keyword id="KW-0699">rRNA-binding</keyword>
<sequence>MARPTGKKFDKRRQQQNPLFKRKKFCRFTAAGVDQIDYKDTETLKDFIGENGKITPARLTGTKAHYQRQLDTAIKRARFLALLPYTDQHKA</sequence>
<feature type="chain" id="PRO_1000003468" description="Small ribosomal subunit protein bS18">
    <location>
        <begin position="1"/>
        <end position="91"/>
    </location>
</feature>
<reference key="1">
    <citation type="submission" date="2007-03" db="EMBL/GenBank/DDBJ databases">
        <title>Complete sequence of chromosome 1 of Burkholderia vietnamiensis G4.</title>
        <authorList>
            <consortium name="US DOE Joint Genome Institute"/>
            <person name="Copeland A."/>
            <person name="Lucas S."/>
            <person name="Lapidus A."/>
            <person name="Barry K."/>
            <person name="Detter J.C."/>
            <person name="Glavina del Rio T."/>
            <person name="Hammon N."/>
            <person name="Israni S."/>
            <person name="Dalin E."/>
            <person name="Tice H."/>
            <person name="Pitluck S."/>
            <person name="Chain P."/>
            <person name="Malfatti S."/>
            <person name="Shin M."/>
            <person name="Vergez L."/>
            <person name="Schmutz J."/>
            <person name="Larimer F."/>
            <person name="Land M."/>
            <person name="Hauser L."/>
            <person name="Kyrpides N."/>
            <person name="Tiedje J."/>
            <person name="Richardson P."/>
        </authorList>
    </citation>
    <scope>NUCLEOTIDE SEQUENCE [LARGE SCALE GENOMIC DNA]</scope>
    <source>
        <strain>G4 / LMG 22486</strain>
    </source>
</reference>
<evidence type="ECO:0000255" key="1">
    <source>
        <dbReference type="HAMAP-Rule" id="MF_00270"/>
    </source>
</evidence>
<evidence type="ECO:0000305" key="2"/>
<dbReference type="EMBL" id="CP000614">
    <property type="protein sequence ID" value="ABO54802.1"/>
    <property type="molecule type" value="Genomic_DNA"/>
</dbReference>
<dbReference type="SMR" id="A4JEU9"/>
<dbReference type="KEGG" id="bvi:Bcep1808_1798"/>
<dbReference type="eggNOG" id="COG0238">
    <property type="taxonomic scope" value="Bacteria"/>
</dbReference>
<dbReference type="HOGENOM" id="CLU_148710_0_3_4"/>
<dbReference type="Proteomes" id="UP000002287">
    <property type="component" value="Chromosome 1"/>
</dbReference>
<dbReference type="GO" id="GO:0022627">
    <property type="term" value="C:cytosolic small ribosomal subunit"/>
    <property type="evidence" value="ECO:0007669"/>
    <property type="project" value="TreeGrafter"/>
</dbReference>
<dbReference type="GO" id="GO:0070181">
    <property type="term" value="F:small ribosomal subunit rRNA binding"/>
    <property type="evidence" value="ECO:0007669"/>
    <property type="project" value="TreeGrafter"/>
</dbReference>
<dbReference type="GO" id="GO:0003735">
    <property type="term" value="F:structural constituent of ribosome"/>
    <property type="evidence" value="ECO:0007669"/>
    <property type="project" value="InterPro"/>
</dbReference>
<dbReference type="GO" id="GO:0006412">
    <property type="term" value="P:translation"/>
    <property type="evidence" value="ECO:0007669"/>
    <property type="project" value="UniProtKB-UniRule"/>
</dbReference>
<dbReference type="Gene3D" id="4.10.640.10">
    <property type="entry name" value="Ribosomal protein S18"/>
    <property type="match status" value="1"/>
</dbReference>
<dbReference type="HAMAP" id="MF_00270">
    <property type="entry name" value="Ribosomal_bS18"/>
    <property type="match status" value="1"/>
</dbReference>
<dbReference type="InterPro" id="IPR001648">
    <property type="entry name" value="Ribosomal_bS18"/>
</dbReference>
<dbReference type="InterPro" id="IPR018275">
    <property type="entry name" value="Ribosomal_bS18_CS"/>
</dbReference>
<dbReference type="InterPro" id="IPR036870">
    <property type="entry name" value="Ribosomal_bS18_sf"/>
</dbReference>
<dbReference type="NCBIfam" id="TIGR00165">
    <property type="entry name" value="S18"/>
    <property type="match status" value="1"/>
</dbReference>
<dbReference type="PANTHER" id="PTHR13479">
    <property type="entry name" value="30S RIBOSOMAL PROTEIN S18"/>
    <property type="match status" value="1"/>
</dbReference>
<dbReference type="PANTHER" id="PTHR13479:SF40">
    <property type="entry name" value="SMALL RIBOSOMAL SUBUNIT PROTEIN BS18M"/>
    <property type="match status" value="1"/>
</dbReference>
<dbReference type="Pfam" id="PF01084">
    <property type="entry name" value="Ribosomal_S18"/>
    <property type="match status" value="1"/>
</dbReference>
<dbReference type="PRINTS" id="PR00974">
    <property type="entry name" value="RIBOSOMALS18"/>
</dbReference>
<dbReference type="SUPFAM" id="SSF46911">
    <property type="entry name" value="Ribosomal protein S18"/>
    <property type="match status" value="1"/>
</dbReference>
<dbReference type="PROSITE" id="PS00057">
    <property type="entry name" value="RIBOSOMAL_S18"/>
    <property type="match status" value="1"/>
</dbReference>
<accession>A4JEU9</accession>
<name>RS18_BURVG</name>
<gene>
    <name evidence="1" type="primary">rpsR</name>
    <name type="ordered locus">Bcep1808_1798</name>
</gene>
<comment type="function">
    <text evidence="1">Binds as a heterodimer with protein bS6 to the central domain of the 16S rRNA, where it helps stabilize the platform of the 30S subunit.</text>
</comment>
<comment type="subunit">
    <text evidence="1">Part of the 30S ribosomal subunit. Forms a tight heterodimer with protein bS6.</text>
</comment>
<comment type="similarity">
    <text evidence="1">Belongs to the bacterial ribosomal protein bS18 family.</text>
</comment>
<protein>
    <recommendedName>
        <fullName evidence="1">Small ribosomal subunit protein bS18</fullName>
    </recommendedName>
    <alternativeName>
        <fullName evidence="2">30S ribosomal protein S18</fullName>
    </alternativeName>
</protein>